<keyword id="KW-0238">DNA-binding</keyword>
<keyword id="KW-0678">Repressor</keyword>
<keyword id="KW-0346">Stress response</keyword>
<keyword id="KW-0804">Transcription</keyword>
<keyword id="KW-0805">Transcription regulation</keyword>
<sequence>MHNMSDIIEQYIKRLFEESNEDVVEIQRANIAQRFDCVPSQLNYVIKTRFTNEHGYEIESKRGGGGYIRITKIENKDATGYINHLLQLIGPSISQQQAYYIIDGLLDKMLINEREAKMIHAVIDRETLSMDMVSRDIIRANILKRLLPVINYY</sequence>
<reference key="1">
    <citation type="journal article" date="2007" name="PLoS ONE">
        <title>Molecular correlates of host specialization in Staphylococcus aureus.</title>
        <authorList>
            <person name="Herron-Olson L."/>
            <person name="Fitzgerald J.R."/>
            <person name="Musser J.M."/>
            <person name="Kapur V."/>
        </authorList>
    </citation>
    <scope>NUCLEOTIDE SEQUENCE [LARGE SCALE GENOMIC DNA]</scope>
    <source>
        <strain>bovine RF122 / ET3-1</strain>
    </source>
</reference>
<feature type="chain" id="PRO_0000274130" description="Transcriptional regulator CtsR">
    <location>
        <begin position="1"/>
        <end position="153"/>
    </location>
</feature>
<protein>
    <recommendedName>
        <fullName>Transcriptional regulator CtsR</fullName>
    </recommendedName>
</protein>
<proteinExistence type="inferred from homology"/>
<accession>Q2YSD9</accession>
<name>CTSR_STAAB</name>
<comment type="function">
    <text evidence="1">Negative regulator of clpC, clpB and clpP transcription by binding directly and specifically to their promoter region.</text>
</comment>
<comment type="similarity">
    <text evidence="2">Belongs to the CtsR family.</text>
</comment>
<organism>
    <name type="scientific">Staphylococcus aureus (strain bovine RF122 / ET3-1)</name>
    <dbReference type="NCBI Taxonomy" id="273036"/>
    <lineage>
        <taxon>Bacteria</taxon>
        <taxon>Bacillati</taxon>
        <taxon>Bacillota</taxon>
        <taxon>Bacilli</taxon>
        <taxon>Bacillales</taxon>
        <taxon>Staphylococcaceae</taxon>
        <taxon>Staphylococcus</taxon>
    </lineage>
</organism>
<dbReference type="EMBL" id="AJ938182">
    <property type="protein sequence ID" value="CAI80160.1"/>
    <property type="molecule type" value="Genomic_DNA"/>
</dbReference>
<dbReference type="RefSeq" id="WP_000551761.1">
    <property type="nucleotide sequence ID" value="NC_007622.1"/>
</dbReference>
<dbReference type="SMR" id="Q2YSD9"/>
<dbReference type="KEGG" id="sab:SAB0472"/>
<dbReference type="HOGENOM" id="CLU_118139_0_0_9"/>
<dbReference type="GO" id="GO:0003677">
    <property type="term" value="F:DNA binding"/>
    <property type="evidence" value="ECO:0007669"/>
    <property type="project" value="UniProtKB-KW"/>
</dbReference>
<dbReference type="GO" id="GO:0006355">
    <property type="term" value="P:regulation of DNA-templated transcription"/>
    <property type="evidence" value="ECO:0007669"/>
    <property type="project" value="InterPro"/>
</dbReference>
<dbReference type="FunFam" id="1.10.1200.150:FF:000002">
    <property type="entry name" value="Transcriptional regulator CtsR"/>
    <property type="match status" value="1"/>
</dbReference>
<dbReference type="FunFam" id="3.30.56.130:FF:000001">
    <property type="entry name" value="Transcriptional regulator CtsR"/>
    <property type="match status" value="1"/>
</dbReference>
<dbReference type="Gene3D" id="1.10.1200.150">
    <property type="entry name" value="Transcriptional regulator CtsR, C-terminal domain"/>
    <property type="match status" value="1"/>
</dbReference>
<dbReference type="Gene3D" id="3.30.56.130">
    <property type="entry name" value="Transcriptional regulator CtsR, winged HTH domain"/>
    <property type="match status" value="1"/>
</dbReference>
<dbReference type="InterPro" id="IPR008463">
    <property type="entry name" value="CtsR"/>
</dbReference>
<dbReference type="InterPro" id="IPR041473">
    <property type="entry name" value="CtsR_C"/>
</dbReference>
<dbReference type="InterPro" id="IPR041908">
    <property type="entry name" value="CtsR_C_sf"/>
</dbReference>
<dbReference type="InterPro" id="IPR040465">
    <property type="entry name" value="CtsR_N"/>
</dbReference>
<dbReference type="InterPro" id="IPR041902">
    <property type="entry name" value="CtsR_N_sf"/>
</dbReference>
<dbReference type="Pfam" id="PF05848">
    <property type="entry name" value="CtsR"/>
    <property type="match status" value="1"/>
</dbReference>
<dbReference type="Pfam" id="PF17727">
    <property type="entry name" value="CtsR_C"/>
    <property type="match status" value="1"/>
</dbReference>
<dbReference type="PIRSF" id="PIRSF010607">
    <property type="entry name" value="Txn_repr_CtsR"/>
    <property type="match status" value="1"/>
</dbReference>
<gene>
    <name type="primary">ctsR</name>
    <name type="ordered locus">SAB0472</name>
</gene>
<evidence type="ECO:0000250" key="1"/>
<evidence type="ECO:0000305" key="2"/>